<dbReference type="EMBL" id="CP000653">
    <property type="protein sequence ID" value="ABP60462.1"/>
    <property type="molecule type" value="Genomic_DNA"/>
</dbReference>
<dbReference type="RefSeq" id="WP_012017177.1">
    <property type="nucleotide sequence ID" value="NC_009436.1"/>
</dbReference>
<dbReference type="SMR" id="A4W9T2"/>
<dbReference type="STRING" id="399742.Ent638_1783"/>
<dbReference type="KEGG" id="ent:Ent638_1783"/>
<dbReference type="eggNOG" id="COG0534">
    <property type="taxonomic scope" value="Bacteria"/>
</dbReference>
<dbReference type="HOGENOM" id="CLU_012893_6_0_6"/>
<dbReference type="OrthoDB" id="9780160at2"/>
<dbReference type="Proteomes" id="UP000000230">
    <property type="component" value="Chromosome"/>
</dbReference>
<dbReference type="GO" id="GO:0005886">
    <property type="term" value="C:plasma membrane"/>
    <property type="evidence" value="ECO:0007669"/>
    <property type="project" value="UniProtKB-SubCell"/>
</dbReference>
<dbReference type="GO" id="GO:0015297">
    <property type="term" value="F:antiporter activity"/>
    <property type="evidence" value="ECO:0007669"/>
    <property type="project" value="UniProtKB-UniRule"/>
</dbReference>
<dbReference type="GO" id="GO:0042910">
    <property type="term" value="F:xenobiotic transmembrane transporter activity"/>
    <property type="evidence" value="ECO:0007669"/>
    <property type="project" value="UniProtKB-UniRule"/>
</dbReference>
<dbReference type="GO" id="GO:0006814">
    <property type="term" value="P:sodium ion transport"/>
    <property type="evidence" value="ECO:0007669"/>
    <property type="project" value="UniProtKB-UniRule"/>
</dbReference>
<dbReference type="GO" id="GO:0006855">
    <property type="term" value="P:xenobiotic transmembrane transport"/>
    <property type="evidence" value="ECO:0007669"/>
    <property type="project" value="UniProtKB-UniRule"/>
</dbReference>
<dbReference type="CDD" id="cd13131">
    <property type="entry name" value="MATE_NorM_like"/>
    <property type="match status" value="1"/>
</dbReference>
<dbReference type="HAMAP" id="MF_00400">
    <property type="entry name" value="MdtK"/>
    <property type="match status" value="1"/>
</dbReference>
<dbReference type="InterPro" id="IPR002528">
    <property type="entry name" value="MATE_fam"/>
</dbReference>
<dbReference type="InterPro" id="IPR050222">
    <property type="entry name" value="MATE_MdtK"/>
</dbReference>
<dbReference type="InterPro" id="IPR048279">
    <property type="entry name" value="MdtK-like"/>
</dbReference>
<dbReference type="InterPro" id="IPR022913">
    <property type="entry name" value="Multidrug-R_MdtK"/>
</dbReference>
<dbReference type="NCBIfam" id="TIGR00797">
    <property type="entry name" value="matE"/>
    <property type="match status" value="1"/>
</dbReference>
<dbReference type="PANTHER" id="PTHR43298:SF2">
    <property type="entry name" value="FMN_FAD EXPORTER YEEO-RELATED"/>
    <property type="match status" value="1"/>
</dbReference>
<dbReference type="PANTHER" id="PTHR43298">
    <property type="entry name" value="MULTIDRUG RESISTANCE PROTEIN NORM-RELATED"/>
    <property type="match status" value="1"/>
</dbReference>
<dbReference type="Pfam" id="PF01554">
    <property type="entry name" value="MatE"/>
    <property type="match status" value="2"/>
</dbReference>
<dbReference type="PIRSF" id="PIRSF006603">
    <property type="entry name" value="DinF"/>
    <property type="match status" value="1"/>
</dbReference>
<evidence type="ECO:0000255" key="1">
    <source>
        <dbReference type="HAMAP-Rule" id="MF_00400"/>
    </source>
</evidence>
<comment type="function">
    <text evidence="1">Multidrug efflux pump that functions probably as a Na(+)/drug antiporter.</text>
</comment>
<comment type="subcellular location">
    <subcellularLocation>
        <location evidence="1">Cell inner membrane</location>
        <topology evidence="1">Multi-pass membrane protein</topology>
    </subcellularLocation>
</comment>
<comment type="similarity">
    <text evidence="1">Belongs to the multi antimicrobial extrusion (MATE) (TC 2.A.66.1) family. MdtK subfamily.</text>
</comment>
<protein>
    <recommendedName>
        <fullName evidence="1">Multidrug resistance protein MdtK</fullName>
    </recommendedName>
    <alternativeName>
        <fullName evidence="1">Multidrug-efflux transporter</fullName>
    </alternativeName>
</protein>
<keyword id="KW-0050">Antiport</keyword>
<keyword id="KW-0997">Cell inner membrane</keyword>
<keyword id="KW-1003">Cell membrane</keyword>
<keyword id="KW-0406">Ion transport</keyword>
<keyword id="KW-0472">Membrane</keyword>
<keyword id="KW-0915">Sodium</keyword>
<keyword id="KW-0739">Sodium transport</keyword>
<keyword id="KW-0812">Transmembrane</keyword>
<keyword id="KW-1133">Transmembrane helix</keyword>
<keyword id="KW-0813">Transport</keyword>
<gene>
    <name evidence="1" type="primary">mdtK</name>
    <name type="ordered locus">Ent638_1783</name>
</gene>
<name>MDTK_ENT38</name>
<organism>
    <name type="scientific">Enterobacter sp. (strain 638)</name>
    <dbReference type="NCBI Taxonomy" id="399742"/>
    <lineage>
        <taxon>Bacteria</taxon>
        <taxon>Pseudomonadati</taxon>
        <taxon>Pseudomonadota</taxon>
        <taxon>Gammaproteobacteria</taxon>
        <taxon>Enterobacterales</taxon>
        <taxon>Enterobacteriaceae</taxon>
        <taxon>Enterobacter</taxon>
    </lineage>
</organism>
<reference key="1">
    <citation type="journal article" date="2010" name="PLoS Genet.">
        <title>Genome sequence of the plant growth promoting endophytic bacterium Enterobacter sp. 638.</title>
        <authorList>
            <person name="Taghavi S."/>
            <person name="van der Lelie D."/>
            <person name="Hoffman A."/>
            <person name="Zhang Y.B."/>
            <person name="Walla M.D."/>
            <person name="Vangronsveld J."/>
            <person name="Newman L."/>
            <person name="Monchy S."/>
        </authorList>
    </citation>
    <scope>NUCLEOTIDE SEQUENCE [LARGE SCALE GENOMIC DNA]</scope>
    <source>
        <strain>638</strain>
    </source>
</reference>
<feature type="chain" id="PRO_1000060797" description="Multidrug resistance protein MdtK">
    <location>
        <begin position="1"/>
        <end position="457"/>
    </location>
</feature>
<feature type="transmembrane region" description="Helical" evidence="1">
    <location>
        <begin position="11"/>
        <end position="31"/>
    </location>
</feature>
<feature type="transmembrane region" description="Helical" evidence="1">
    <location>
        <begin position="53"/>
        <end position="73"/>
    </location>
</feature>
<feature type="transmembrane region" description="Helical" evidence="1">
    <location>
        <begin position="93"/>
        <end position="113"/>
    </location>
</feature>
<feature type="transmembrane region" description="Helical" evidence="1">
    <location>
        <begin position="127"/>
        <end position="147"/>
    </location>
</feature>
<feature type="transmembrane region" description="Helical" evidence="1">
    <location>
        <begin position="160"/>
        <end position="180"/>
    </location>
</feature>
<feature type="transmembrane region" description="Helical" evidence="1">
    <location>
        <begin position="189"/>
        <end position="209"/>
    </location>
</feature>
<feature type="transmembrane region" description="Helical" evidence="1">
    <location>
        <begin position="243"/>
        <end position="263"/>
    </location>
</feature>
<feature type="transmembrane region" description="Helical" evidence="1">
    <location>
        <begin position="276"/>
        <end position="296"/>
    </location>
</feature>
<feature type="transmembrane region" description="Helical" evidence="1">
    <location>
        <begin position="314"/>
        <end position="334"/>
    </location>
</feature>
<feature type="transmembrane region" description="Helical" evidence="1">
    <location>
        <begin position="357"/>
        <end position="377"/>
    </location>
</feature>
<feature type="transmembrane region" description="Helical" evidence="1">
    <location>
        <begin position="387"/>
        <end position="407"/>
    </location>
</feature>
<feature type="transmembrane region" description="Helical" evidence="1">
    <location>
        <begin position="418"/>
        <end position="438"/>
    </location>
</feature>
<accession>A4W9T2</accession>
<proteinExistence type="inferred from homology"/>
<sequence length="457" mass="49778">MQKYMLEARQLLALAIPVIIAQVAQTSMGFVDTVMAGGYSATDMAAVAIGTSIWLPAILFGHGLLLALTPVIAQLNGSGRRERIAHQVRQGFWLAGFVSILIMVVLWNAGYIIRSMDNIDPALADKAVGYLRALLWGAPGYLFFQVARNQCEGLAKTKPGMVMGFIGLLVNIPVNYIFIYGHFGMPELGGVGCGVATAAVYWVMFFSMISYVKRARSMRDIRNEQRFSKPDMDVLKRLAQLGLPIALALFFEVTLFAVVALLVSPLGIVDVAGHQIALNFSSLMFVLPMSLAAAVTIRVGYRLGQGSTLDAQTAARTGLGVGVCMAFCTALFTVTLREQIALLYNDNPEVITLASQLMLLAAIYQLSDSIQVIGSGILRGYKDTRSIFFITFTAYWVLGLPTGYILALTDLVVDRMGPAGFWMGFIIGLTSAAILMMLRMRFLQRQPSSVILQRAAR</sequence>